<keyword id="KW-0067">ATP-binding</keyword>
<keyword id="KW-0903">Direct protein sequencing</keyword>
<keyword id="KW-0317">Glutathione biosynthesis</keyword>
<keyword id="KW-0436">Ligase</keyword>
<keyword id="KW-0460">Magnesium</keyword>
<keyword id="KW-0479">Metal-binding</keyword>
<keyword id="KW-0547">Nucleotide-binding</keyword>
<keyword id="KW-0597">Phosphoprotein</keyword>
<keyword id="KW-1185">Reference proteome</keyword>
<gene>
    <name type="primary">gsa1</name>
    <name type="synonym">gsh2</name>
    <name type="ORF">SPAC3F10.04</name>
</gene>
<feature type="chain" id="PRO_0000211265" description="Glutathione synthetase large chain">
    <location>
        <begin position="1"/>
        <end position="498"/>
    </location>
</feature>
<feature type="binding site" evidence="1">
    <location>
        <position position="128"/>
    </location>
    <ligand>
        <name>substrate</name>
    </ligand>
</feature>
<feature type="binding site" evidence="1">
    <location>
        <position position="146"/>
    </location>
    <ligand>
        <name>ATP</name>
        <dbReference type="ChEBI" id="CHEBI:30616"/>
    </ligand>
</feature>
<feature type="binding site" evidence="1">
    <location>
        <position position="146"/>
    </location>
    <ligand>
        <name>Mg(2+)</name>
        <dbReference type="ChEBI" id="CHEBI:18420"/>
    </ligand>
</feature>
<feature type="binding site" evidence="1">
    <location>
        <position position="148"/>
    </location>
    <ligand>
        <name>Mg(2+)</name>
        <dbReference type="ChEBI" id="CHEBI:18420"/>
    </ligand>
</feature>
<feature type="binding site" evidence="1">
    <location>
        <begin position="150"/>
        <end position="153"/>
    </location>
    <ligand>
        <name>substrate</name>
    </ligand>
</feature>
<feature type="binding site" evidence="1">
    <location>
        <begin position="233"/>
        <end position="235"/>
    </location>
    <ligand>
        <name>substrate</name>
    </ligand>
</feature>
<feature type="binding site" evidence="1">
    <location>
        <position position="239"/>
    </location>
    <ligand>
        <name>substrate</name>
    </ligand>
</feature>
<feature type="binding site" evidence="1">
    <location>
        <begin position="291"/>
        <end position="294"/>
    </location>
    <ligand>
        <name>substrate</name>
    </ligand>
</feature>
<feature type="binding site" evidence="1">
    <location>
        <position position="330"/>
    </location>
    <ligand>
        <name>ATP</name>
        <dbReference type="ChEBI" id="CHEBI:30616"/>
    </ligand>
</feature>
<feature type="binding site" evidence="1">
    <location>
        <begin position="387"/>
        <end position="396"/>
    </location>
    <ligand>
        <name>ATP</name>
        <dbReference type="ChEBI" id="CHEBI:30616"/>
    </ligand>
</feature>
<feature type="binding site" evidence="1">
    <location>
        <position position="391"/>
    </location>
    <ligand>
        <name>Mg(2+)</name>
        <dbReference type="ChEBI" id="CHEBI:18420"/>
    </ligand>
</feature>
<feature type="binding site" evidence="1">
    <location>
        <position position="398"/>
    </location>
    <ligand>
        <name>ATP</name>
        <dbReference type="ChEBI" id="CHEBI:30616"/>
    </ligand>
</feature>
<feature type="binding site" evidence="1">
    <location>
        <begin position="420"/>
        <end position="423"/>
    </location>
    <ligand>
        <name>ATP</name>
        <dbReference type="ChEBI" id="CHEBI:30616"/>
    </ligand>
</feature>
<feature type="binding site" evidence="1">
    <location>
        <position position="446"/>
    </location>
    <ligand>
        <name>ATP</name>
        <dbReference type="ChEBI" id="CHEBI:30616"/>
    </ligand>
</feature>
<feature type="binding site" evidence="1">
    <location>
        <position position="473"/>
    </location>
    <ligand>
        <name>substrate</name>
    </ligand>
</feature>
<feature type="binding site" evidence="1">
    <location>
        <position position="475"/>
    </location>
    <ligand>
        <name>ATP</name>
        <dbReference type="ChEBI" id="CHEBI:30616"/>
    </ligand>
</feature>
<feature type="binding site" evidence="1">
    <location>
        <position position="481"/>
    </location>
    <ligand>
        <name>ATP</name>
        <dbReference type="ChEBI" id="CHEBI:30616"/>
    </ligand>
</feature>
<feature type="binding site" evidence="1">
    <location>
        <begin position="484"/>
        <end position="485"/>
    </location>
    <ligand>
        <name>substrate</name>
    </ligand>
</feature>
<feature type="modified residue" description="Phosphoserine" evidence="2">
    <location>
        <position position="356"/>
    </location>
</feature>
<feature type="sequence conflict" description="In Ref. 2; AAL41009." evidence="3" ref="2">
    <original>M</original>
    <variation>T</variation>
    <location>
        <position position="132"/>
    </location>
</feature>
<feature type="sequence conflict" description="In Ref. 4; AAA35307." evidence="3" ref="4">
    <original>N</original>
    <variation>T</variation>
    <location>
        <position position="263"/>
    </location>
</feature>
<feature type="sequence conflict" description="In Ref. 4; AAA35307." evidence="3" ref="4">
    <original>A</original>
    <variation>R</variation>
    <location>
        <position position="304"/>
    </location>
</feature>
<feature type="sequence conflict" description="In Ref. 4; AAA35307." evidence="3" ref="4">
    <original>K</original>
    <variation>E</variation>
    <location>
        <position position="330"/>
    </location>
</feature>
<feature type="sequence conflict" description="In Ref. 4; AAA35307." evidence="3" ref="4">
    <original>K</original>
    <variation>N</variation>
    <location>
        <position position="458"/>
    </location>
</feature>
<accession>P35669</accession>
<accession>Q8X1A1</accession>
<dbReference type="EC" id="6.3.2.3"/>
<dbReference type="EMBL" id="CU329670">
    <property type="protein sequence ID" value="CAA93302.1"/>
    <property type="molecule type" value="Genomic_DNA"/>
</dbReference>
<dbReference type="EMBL" id="AF448236">
    <property type="protein sequence ID" value="AAL41009.1"/>
    <property type="molecule type" value="Genomic_DNA"/>
</dbReference>
<dbReference type="EMBL" id="Y08414">
    <property type="protein sequence ID" value="CAA69691.1"/>
    <property type="molecule type" value="Genomic_DNA"/>
</dbReference>
<dbReference type="EMBL" id="M85179">
    <property type="protein sequence ID" value="AAA35307.1"/>
    <property type="molecule type" value="Genomic_DNA"/>
</dbReference>
<dbReference type="PIR" id="JT0961">
    <property type="entry name" value="JT0961"/>
</dbReference>
<dbReference type="PIR" id="T38705">
    <property type="entry name" value="T38705"/>
</dbReference>
<dbReference type="RefSeq" id="NP_593936.1">
    <property type="nucleotide sequence ID" value="NM_001019364.2"/>
</dbReference>
<dbReference type="SMR" id="P35669"/>
<dbReference type="BioGRID" id="279340">
    <property type="interactions" value="11"/>
</dbReference>
<dbReference type="FunCoup" id="P35669">
    <property type="interactions" value="747"/>
</dbReference>
<dbReference type="STRING" id="284812.P35669"/>
<dbReference type="iPTMnet" id="P35669"/>
<dbReference type="PaxDb" id="4896-SPAC3F10.04.1"/>
<dbReference type="EnsemblFungi" id="SPAC3F10.04.1">
    <property type="protein sequence ID" value="SPAC3F10.04.1:pep"/>
    <property type="gene ID" value="SPAC3F10.04"/>
</dbReference>
<dbReference type="PomBase" id="SPAC3F10.04">
    <property type="gene designation" value="gsa1"/>
</dbReference>
<dbReference type="VEuPathDB" id="FungiDB:SPAC3F10.04"/>
<dbReference type="eggNOG" id="KOG0021">
    <property type="taxonomic scope" value="Eukaryota"/>
</dbReference>
<dbReference type="HOGENOM" id="CLU_025152_2_1_1"/>
<dbReference type="InParanoid" id="P35669"/>
<dbReference type="OMA" id="NGLVMYP"/>
<dbReference type="PhylomeDB" id="P35669"/>
<dbReference type="BioCyc" id="MetaCyc:MONOMER-10022"/>
<dbReference type="BRENDA" id="6.3.2.3">
    <property type="organism ID" value="5613"/>
</dbReference>
<dbReference type="Reactome" id="R-SPO-174403">
    <property type="pathway name" value="Glutathione synthesis and recycling"/>
</dbReference>
<dbReference type="UniPathway" id="UPA00142">
    <property type="reaction ID" value="UER00210"/>
</dbReference>
<dbReference type="PRO" id="PR:P35669"/>
<dbReference type="Proteomes" id="UP000002485">
    <property type="component" value="Chromosome I"/>
</dbReference>
<dbReference type="GO" id="GO:0005829">
    <property type="term" value="C:cytosol"/>
    <property type="evidence" value="ECO:0007005"/>
    <property type="project" value="PomBase"/>
</dbReference>
<dbReference type="GO" id="GO:0036087">
    <property type="term" value="C:glutathione synthase complex"/>
    <property type="evidence" value="ECO:0000314"/>
    <property type="project" value="PomBase"/>
</dbReference>
<dbReference type="GO" id="GO:0005524">
    <property type="term" value="F:ATP binding"/>
    <property type="evidence" value="ECO:0000250"/>
    <property type="project" value="UniProtKB"/>
</dbReference>
<dbReference type="GO" id="GO:0043295">
    <property type="term" value="F:glutathione binding"/>
    <property type="evidence" value="ECO:0000250"/>
    <property type="project" value="UniProtKB"/>
</dbReference>
<dbReference type="GO" id="GO:0004363">
    <property type="term" value="F:glutathione synthase activity"/>
    <property type="evidence" value="ECO:0000314"/>
    <property type="project" value="PomBase"/>
</dbReference>
<dbReference type="GO" id="GO:0000287">
    <property type="term" value="F:magnesium ion binding"/>
    <property type="evidence" value="ECO:0000250"/>
    <property type="project" value="UniProtKB"/>
</dbReference>
<dbReference type="GO" id="GO:0042803">
    <property type="term" value="F:protein homodimerization activity"/>
    <property type="evidence" value="ECO:0000250"/>
    <property type="project" value="UniProtKB"/>
</dbReference>
<dbReference type="GO" id="GO:0098849">
    <property type="term" value="P:cellular detoxification of cadmium ion"/>
    <property type="evidence" value="ECO:0000315"/>
    <property type="project" value="PomBase"/>
</dbReference>
<dbReference type="GO" id="GO:0071276">
    <property type="term" value="P:cellular response to cadmium ion"/>
    <property type="evidence" value="ECO:0000315"/>
    <property type="project" value="PomBase"/>
</dbReference>
<dbReference type="GO" id="GO:0006750">
    <property type="term" value="P:glutathione biosynthetic process"/>
    <property type="evidence" value="ECO:0000314"/>
    <property type="project" value="PomBase"/>
</dbReference>
<dbReference type="GO" id="GO:0046938">
    <property type="term" value="P:phytochelatin biosynthetic process"/>
    <property type="evidence" value="ECO:0000315"/>
    <property type="project" value="PomBase"/>
</dbReference>
<dbReference type="GO" id="GO:0090423">
    <property type="term" value="P:phytochelatin-metal complex formation"/>
    <property type="evidence" value="ECO:0000315"/>
    <property type="project" value="PomBase"/>
</dbReference>
<dbReference type="CDD" id="cd00228">
    <property type="entry name" value="eu-GS"/>
    <property type="match status" value="1"/>
</dbReference>
<dbReference type="FunFam" id="3.30.1490.50:FF:000002">
    <property type="entry name" value="Glutathione synthetase"/>
    <property type="match status" value="1"/>
</dbReference>
<dbReference type="Gene3D" id="3.30.1490.50">
    <property type="match status" value="1"/>
</dbReference>
<dbReference type="Gene3D" id="3.30.1490.80">
    <property type="match status" value="1"/>
</dbReference>
<dbReference type="Gene3D" id="3.30.470.20">
    <property type="entry name" value="ATP-grasp fold, B domain"/>
    <property type="match status" value="1"/>
</dbReference>
<dbReference type="Gene3D" id="3.40.50.1760">
    <property type="entry name" value="Glutathione synthase, substrate-binding domain superfamily, eukaryotic"/>
    <property type="match status" value="1"/>
</dbReference>
<dbReference type="Gene3D" id="1.10.1080.10">
    <property type="entry name" value="Glutathione Synthetase, Chain A, domain 3"/>
    <property type="match status" value="1"/>
</dbReference>
<dbReference type="InterPro" id="IPR005615">
    <property type="entry name" value="Glutathione_synthase"/>
</dbReference>
<dbReference type="InterPro" id="IPR014042">
    <property type="entry name" value="Glutathione_synthase_a-hlx"/>
</dbReference>
<dbReference type="InterPro" id="IPR014709">
    <property type="entry name" value="Glutathione_synthase_C_euk"/>
</dbReference>
<dbReference type="InterPro" id="IPR014049">
    <property type="entry name" value="Glutathione_synthase_N_euk"/>
</dbReference>
<dbReference type="InterPro" id="IPR037013">
    <property type="entry name" value="GSH-S_sub-bd_sf"/>
</dbReference>
<dbReference type="InterPro" id="IPR004887">
    <property type="entry name" value="GSH_synth_subst-bd"/>
</dbReference>
<dbReference type="InterPro" id="IPR016185">
    <property type="entry name" value="PreATP-grasp_dom_sf"/>
</dbReference>
<dbReference type="NCBIfam" id="TIGR01986">
    <property type="entry name" value="glut_syn_euk"/>
    <property type="match status" value="1"/>
</dbReference>
<dbReference type="PANTHER" id="PTHR11130">
    <property type="entry name" value="GLUTATHIONE SYNTHETASE"/>
    <property type="match status" value="1"/>
</dbReference>
<dbReference type="PANTHER" id="PTHR11130:SF0">
    <property type="entry name" value="GLUTATHIONE SYNTHETASE"/>
    <property type="match status" value="1"/>
</dbReference>
<dbReference type="Pfam" id="PF03917">
    <property type="entry name" value="GSH_synth_ATP"/>
    <property type="match status" value="1"/>
</dbReference>
<dbReference type="Pfam" id="PF03199">
    <property type="entry name" value="GSH_synthase"/>
    <property type="match status" value="1"/>
</dbReference>
<dbReference type="PIRSF" id="PIRSF001558">
    <property type="entry name" value="GSHase"/>
    <property type="match status" value="1"/>
</dbReference>
<dbReference type="SUPFAM" id="SSF56059">
    <property type="entry name" value="Glutathione synthetase ATP-binding domain-like"/>
    <property type="match status" value="1"/>
</dbReference>
<dbReference type="SUPFAM" id="SSF52440">
    <property type="entry name" value="PreATP-grasp domain"/>
    <property type="match status" value="1"/>
</dbReference>
<comment type="catalytic activity">
    <reaction>
        <text>gamma-L-glutamyl-L-cysteine + glycine + ATP = glutathione + ADP + phosphate + H(+)</text>
        <dbReference type="Rhea" id="RHEA:13557"/>
        <dbReference type="ChEBI" id="CHEBI:15378"/>
        <dbReference type="ChEBI" id="CHEBI:30616"/>
        <dbReference type="ChEBI" id="CHEBI:43474"/>
        <dbReference type="ChEBI" id="CHEBI:57305"/>
        <dbReference type="ChEBI" id="CHEBI:57925"/>
        <dbReference type="ChEBI" id="CHEBI:58173"/>
        <dbReference type="ChEBI" id="CHEBI:456216"/>
        <dbReference type="EC" id="6.3.2.3"/>
    </reaction>
</comment>
<comment type="cofactor">
    <cofactor evidence="1">
        <name>Mg(2+)</name>
        <dbReference type="ChEBI" id="CHEBI:18420"/>
    </cofactor>
    <text evidence="1">Binds 1 Mg(2+) ion per subunit.</text>
</comment>
<comment type="pathway">
    <text>Sulfur metabolism; glutathione biosynthesis; glutathione from L-cysteine and L-glutamate: step 2/2.</text>
</comment>
<comment type="subunit">
    <text>Heterodimer composed of a large and a small chain.</text>
</comment>
<comment type="similarity">
    <text evidence="3">Belongs to the eukaryotic GSH synthase family.</text>
</comment>
<proteinExistence type="evidence at protein level"/>
<protein>
    <recommendedName>
        <fullName>Glutathione synthetase large chain</fullName>
        <shortName>GSH synthetase large chain</shortName>
        <shortName>GSH-S</shortName>
        <ecNumber>6.3.2.3</ecNumber>
    </recommendedName>
    <alternativeName>
        <fullName>Glutathione synthase large chain</fullName>
    </alternativeName>
    <alternativeName>
        <fullName>Phytochelatin synthetase</fullName>
    </alternativeName>
</protein>
<organism>
    <name type="scientific">Schizosaccharomyces pombe (strain 972 / ATCC 24843)</name>
    <name type="common">Fission yeast</name>
    <dbReference type="NCBI Taxonomy" id="284812"/>
    <lineage>
        <taxon>Eukaryota</taxon>
        <taxon>Fungi</taxon>
        <taxon>Dikarya</taxon>
        <taxon>Ascomycota</taxon>
        <taxon>Taphrinomycotina</taxon>
        <taxon>Schizosaccharomycetes</taxon>
        <taxon>Schizosaccharomycetales</taxon>
        <taxon>Schizosaccharomycetaceae</taxon>
        <taxon>Schizosaccharomyces</taxon>
    </lineage>
</organism>
<evidence type="ECO:0000250" key="1"/>
<evidence type="ECO:0000269" key="2">
    <source>
    </source>
</evidence>
<evidence type="ECO:0000305" key="3"/>
<name>GSHB_SCHPO</name>
<reference key="1">
    <citation type="journal article" date="1999" name="Yeast">
        <title>Biosynthesis of phytochelatins in the fission yeast. Phytochelatin synthesis: a second role for the glutathione synthetase gene of Schizosaccharomyces pombe.</title>
        <authorList>
            <person name="Al-Lahham A."/>
            <person name="Rohde V."/>
            <person name="Heim P."/>
            <person name="Leuchter R."/>
            <person name="Veeck J."/>
            <person name="Wunderlich C."/>
            <person name="Wolf K."/>
            <person name="Zimmermann M."/>
        </authorList>
    </citation>
    <scope>NUCLEOTIDE SEQUENCE [GENOMIC DNA]</scope>
    <source>
        <strain>SP011</strain>
    </source>
</reference>
<reference key="2">
    <citation type="submission" date="2001-11" db="EMBL/GenBank/DDBJ databases">
        <authorList>
            <person name="Shin Y.H."/>
            <person name="Lim C.-J."/>
        </authorList>
    </citation>
    <scope>NUCLEOTIDE SEQUENCE [GENOMIC DNA]</scope>
</reference>
<reference key="3">
    <citation type="journal article" date="2002" name="Nature">
        <title>The genome sequence of Schizosaccharomyces pombe.</title>
        <authorList>
            <person name="Wood V."/>
            <person name="Gwilliam R."/>
            <person name="Rajandream M.A."/>
            <person name="Lyne M.H."/>
            <person name="Lyne R."/>
            <person name="Stewart A."/>
            <person name="Sgouros J.G."/>
            <person name="Peat N."/>
            <person name="Hayles J."/>
            <person name="Baker S.G."/>
            <person name="Basham D."/>
            <person name="Bowman S."/>
            <person name="Brooks K."/>
            <person name="Brown D."/>
            <person name="Brown S."/>
            <person name="Chillingworth T."/>
            <person name="Churcher C.M."/>
            <person name="Collins M."/>
            <person name="Connor R."/>
            <person name="Cronin A."/>
            <person name="Davis P."/>
            <person name="Feltwell T."/>
            <person name="Fraser A."/>
            <person name="Gentles S."/>
            <person name="Goble A."/>
            <person name="Hamlin N."/>
            <person name="Harris D.E."/>
            <person name="Hidalgo J."/>
            <person name="Hodgson G."/>
            <person name="Holroyd S."/>
            <person name="Hornsby T."/>
            <person name="Howarth S."/>
            <person name="Huckle E.J."/>
            <person name="Hunt S."/>
            <person name="Jagels K."/>
            <person name="James K.D."/>
            <person name="Jones L."/>
            <person name="Jones M."/>
            <person name="Leather S."/>
            <person name="McDonald S."/>
            <person name="McLean J."/>
            <person name="Mooney P."/>
            <person name="Moule S."/>
            <person name="Mungall K.L."/>
            <person name="Murphy L.D."/>
            <person name="Niblett D."/>
            <person name="Odell C."/>
            <person name="Oliver K."/>
            <person name="O'Neil S."/>
            <person name="Pearson D."/>
            <person name="Quail M.A."/>
            <person name="Rabbinowitsch E."/>
            <person name="Rutherford K.M."/>
            <person name="Rutter S."/>
            <person name="Saunders D."/>
            <person name="Seeger K."/>
            <person name="Sharp S."/>
            <person name="Skelton J."/>
            <person name="Simmonds M.N."/>
            <person name="Squares R."/>
            <person name="Squares S."/>
            <person name="Stevens K."/>
            <person name="Taylor K."/>
            <person name="Taylor R.G."/>
            <person name="Tivey A."/>
            <person name="Walsh S.V."/>
            <person name="Warren T."/>
            <person name="Whitehead S."/>
            <person name="Woodward J.R."/>
            <person name="Volckaert G."/>
            <person name="Aert R."/>
            <person name="Robben J."/>
            <person name="Grymonprez B."/>
            <person name="Weltjens I."/>
            <person name="Vanstreels E."/>
            <person name="Rieger M."/>
            <person name="Schaefer M."/>
            <person name="Mueller-Auer S."/>
            <person name="Gabel C."/>
            <person name="Fuchs M."/>
            <person name="Duesterhoeft A."/>
            <person name="Fritzc C."/>
            <person name="Holzer E."/>
            <person name="Moestl D."/>
            <person name="Hilbert H."/>
            <person name="Borzym K."/>
            <person name="Langer I."/>
            <person name="Beck A."/>
            <person name="Lehrach H."/>
            <person name="Reinhardt R."/>
            <person name="Pohl T.M."/>
            <person name="Eger P."/>
            <person name="Zimmermann W."/>
            <person name="Wedler H."/>
            <person name="Wambutt R."/>
            <person name="Purnelle B."/>
            <person name="Goffeau A."/>
            <person name="Cadieu E."/>
            <person name="Dreano S."/>
            <person name="Gloux S."/>
            <person name="Lelaure V."/>
            <person name="Mottier S."/>
            <person name="Galibert F."/>
            <person name="Aves S.J."/>
            <person name="Xiang Z."/>
            <person name="Hunt C."/>
            <person name="Moore K."/>
            <person name="Hurst S.M."/>
            <person name="Lucas M."/>
            <person name="Rochet M."/>
            <person name="Gaillardin C."/>
            <person name="Tallada V.A."/>
            <person name="Garzon A."/>
            <person name="Thode G."/>
            <person name="Daga R.R."/>
            <person name="Cruzado L."/>
            <person name="Jimenez J."/>
            <person name="Sanchez M."/>
            <person name="del Rey F."/>
            <person name="Benito J."/>
            <person name="Dominguez A."/>
            <person name="Revuelta J.L."/>
            <person name="Moreno S."/>
            <person name="Armstrong J."/>
            <person name="Forsburg S.L."/>
            <person name="Cerutti L."/>
            <person name="Lowe T."/>
            <person name="McCombie W.R."/>
            <person name="Paulsen I."/>
            <person name="Potashkin J."/>
            <person name="Shpakovski G.V."/>
            <person name="Ussery D."/>
            <person name="Barrell B.G."/>
            <person name="Nurse P."/>
        </authorList>
    </citation>
    <scope>NUCLEOTIDE SEQUENCE [LARGE SCALE GENOMIC DNA]</scope>
    <source>
        <strain>972 / ATCC 24843</strain>
    </source>
</reference>
<reference key="4">
    <citation type="journal article" date="1991" name="Biochem. Biophys. Res. Commun.">
        <title>Cloning and sequencing of the gene encoding the large subunit of glutathione synthetase of Schizosaccharomyces pombe.</title>
        <authorList>
            <person name="Mutoh N."/>
            <person name="Nakagawa C.W."/>
            <person name="Ando S."/>
            <person name="Tanabe K."/>
            <person name="Hayashi Y."/>
        </authorList>
    </citation>
    <scope>NUCLEOTIDE SEQUENCE [GENOMIC DNA] OF 214-498</scope>
    <scope>PROTEIN SEQUENCE OF 218-229 AND 392-403</scope>
    <source>
        <strain>972 / ATCC 24843</strain>
    </source>
</reference>
<reference key="5">
    <citation type="journal article" date="2008" name="J. Proteome Res.">
        <title>Phosphoproteome analysis of fission yeast.</title>
        <authorList>
            <person name="Wilson-Grady J.T."/>
            <person name="Villen J."/>
            <person name="Gygi S.P."/>
        </authorList>
    </citation>
    <scope>PHOSPHORYLATION [LARGE SCALE ANALYSIS] AT SER-356</scope>
    <scope>IDENTIFICATION BY MASS SPECTROMETRY</scope>
</reference>
<sequence length="498" mass="56153">MEIEKYTPEQIEELGKGARDFAFAHGVVFTELSVSKEGRNIATQIPITLFPSVIPHGAFVEAVSVQKAYNKLYAKIANDYEFLRLHLQSITKYDEFMNKLWNLYQKHREAVAHLKENQFQPLSLGVFRSDYMVHQDDSFIGCKQVEFNTISVSFGGVSKAVSNLHAYCSQSGLYRKPLTTNYLTVNTSVSGICTGISNAVDAYRDYVKNITSKMNIASDNTKPIVLFVVKGGERNITDQRTLEYELLNRFHVISKRIDIAELNSLIHDKSSNKLYMKTSFTTYEVAVVYYRVGYALDDYPSQEAWDMRLTIENTLAIKCPSISTHLAGSKKIQQVLAESNALERFLEGDELQAVRSTFADMYPLDDTPRGKEGIKLAFEKPEDFVLKPQREGGGNNTYGKDIPGLLSKMPQEEWDSYILMRYINAVPSQNYILKGERPEKFDVVDEIGILGTIVWNIKTDEVVQNGQSGFICRTKPKKTNEGGVATGYASLSSIELSE</sequence>